<keyword id="KW-0342">GTP-binding</keyword>
<keyword id="KW-0378">Hydrolase</keyword>
<keyword id="KW-0479">Metal-binding</keyword>
<keyword id="KW-0547">Nucleotide-binding</keyword>
<keyword id="KW-0554">One-carbon metabolism</keyword>
<keyword id="KW-0862">Zinc</keyword>
<sequence length="46" mass="4895">VEAEHMCMTMRGVKKPGAKTVTSAVRGTFANVAAARAEVLSFIKND</sequence>
<organism>
    <name type="scientific">Bacillus pumilus</name>
    <name type="common">Bacillus mesentericus</name>
    <dbReference type="NCBI Taxonomy" id="1408"/>
    <lineage>
        <taxon>Bacteria</taxon>
        <taxon>Bacillati</taxon>
        <taxon>Bacillota</taxon>
        <taxon>Bacilli</taxon>
        <taxon>Bacillales</taxon>
        <taxon>Bacillaceae</taxon>
        <taxon>Bacillus</taxon>
    </lineage>
</organism>
<name>GCH1_BACPU</name>
<evidence type="ECO:0000250" key="1"/>
<evidence type="ECO:0000305" key="2"/>
<feature type="chain" id="PRO_0000119385" description="GTP cyclohydrolase 1">
    <location>
        <begin position="1" status="less than"/>
        <end position="46"/>
    </location>
</feature>
<feature type="binding site" evidence="1">
    <location>
        <position position="7"/>
    </location>
    <ligand>
        <name>Zn(2+)</name>
        <dbReference type="ChEBI" id="CHEBI:29105"/>
    </ligand>
</feature>
<feature type="non-terminal residue">
    <location>
        <position position="1"/>
    </location>
</feature>
<accession>P48063</accession>
<protein>
    <recommendedName>
        <fullName>GTP cyclohydrolase 1</fullName>
        <ecNumber>3.5.4.16</ecNumber>
    </recommendedName>
    <alternativeName>
        <fullName>GTP cyclohydrolase I</fullName>
        <shortName>GTP-CH-I</shortName>
    </alternativeName>
</protein>
<dbReference type="EC" id="3.5.4.16"/>
<dbReference type="EMBL" id="L37879">
    <property type="protein sequence ID" value="AAA67543.1"/>
    <property type="molecule type" value="Genomic_DNA"/>
</dbReference>
<dbReference type="PIR" id="I39904">
    <property type="entry name" value="I39904"/>
</dbReference>
<dbReference type="SMR" id="P48063"/>
<dbReference type="UniPathway" id="UPA00848">
    <property type="reaction ID" value="UER00151"/>
</dbReference>
<dbReference type="GO" id="GO:0005737">
    <property type="term" value="C:cytoplasm"/>
    <property type="evidence" value="ECO:0007669"/>
    <property type="project" value="TreeGrafter"/>
</dbReference>
<dbReference type="GO" id="GO:0005525">
    <property type="term" value="F:GTP binding"/>
    <property type="evidence" value="ECO:0007669"/>
    <property type="project" value="UniProtKB-KW"/>
</dbReference>
<dbReference type="GO" id="GO:0003934">
    <property type="term" value="F:GTP cyclohydrolase I activity"/>
    <property type="evidence" value="ECO:0007669"/>
    <property type="project" value="UniProtKB-EC"/>
</dbReference>
<dbReference type="GO" id="GO:0008270">
    <property type="term" value="F:zinc ion binding"/>
    <property type="evidence" value="ECO:0007669"/>
    <property type="project" value="TreeGrafter"/>
</dbReference>
<dbReference type="GO" id="GO:0006730">
    <property type="term" value="P:one-carbon metabolic process"/>
    <property type="evidence" value="ECO:0007669"/>
    <property type="project" value="UniProtKB-KW"/>
</dbReference>
<dbReference type="GO" id="GO:0006729">
    <property type="term" value="P:tetrahydrobiopterin biosynthetic process"/>
    <property type="evidence" value="ECO:0007669"/>
    <property type="project" value="TreeGrafter"/>
</dbReference>
<dbReference type="GO" id="GO:0046654">
    <property type="term" value="P:tetrahydrofolate biosynthetic process"/>
    <property type="evidence" value="ECO:0007669"/>
    <property type="project" value="InterPro"/>
</dbReference>
<dbReference type="Gene3D" id="3.30.1130.10">
    <property type="match status" value="1"/>
</dbReference>
<dbReference type="InterPro" id="IPR043133">
    <property type="entry name" value="GTP-CH-I_C/QueF"/>
</dbReference>
<dbReference type="InterPro" id="IPR001474">
    <property type="entry name" value="GTP_CycHdrlase_I"/>
</dbReference>
<dbReference type="InterPro" id="IPR020602">
    <property type="entry name" value="GTP_CycHdrlase_I_dom"/>
</dbReference>
<dbReference type="PANTHER" id="PTHR11109:SF7">
    <property type="entry name" value="GTP CYCLOHYDROLASE 1"/>
    <property type="match status" value="1"/>
</dbReference>
<dbReference type="PANTHER" id="PTHR11109">
    <property type="entry name" value="GTP CYCLOHYDROLASE I"/>
    <property type="match status" value="1"/>
</dbReference>
<dbReference type="Pfam" id="PF01227">
    <property type="entry name" value="GTP_cyclohydroI"/>
    <property type="match status" value="1"/>
</dbReference>
<dbReference type="SUPFAM" id="SSF55620">
    <property type="entry name" value="Tetrahydrobiopterin biosynthesis enzymes-like"/>
    <property type="match status" value="1"/>
</dbReference>
<proteinExistence type="inferred from homology"/>
<reference key="1">
    <citation type="journal article" date="1995" name="J. Bacteriol.">
        <title>The mtrB gene of Bacillus pumilus encodes a protein with sequence and functional homology to the trp RNA-binding attenuation protein (TRAP) of Bacillus subtilis.</title>
        <authorList>
            <person name="Hoffman R.J."/>
            <person name="Gollnick P."/>
        </authorList>
    </citation>
    <scope>NUCLEOTIDE SEQUENCE [GENOMIC DNA]</scope>
</reference>
<gene>
    <name type="primary">folE</name>
    <name type="synonym">mtrA</name>
</gene>
<comment type="catalytic activity">
    <reaction>
        <text>GTP + H2O = 7,8-dihydroneopterin 3'-triphosphate + formate + H(+)</text>
        <dbReference type="Rhea" id="RHEA:17473"/>
        <dbReference type="ChEBI" id="CHEBI:15377"/>
        <dbReference type="ChEBI" id="CHEBI:15378"/>
        <dbReference type="ChEBI" id="CHEBI:15740"/>
        <dbReference type="ChEBI" id="CHEBI:37565"/>
        <dbReference type="ChEBI" id="CHEBI:58462"/>
        <dbReference type="EC" id="3.5.4.16"/>
    </reaction>
</comment>
<comment type="pathway">
    <text>Cofactor biosynthesis; 7,8-dihydroneopterin triphosphate biosynthesis; 7,8-dihydroneopterin triphosphate from GTP: step 1/1.</text>
</comment>
<comment type="subunit">
    <text>Homomer.</text>
</comment>
<comment type="similarity">
    <text evidence="2">Belongs to the GTP cyclohydrolase I family.</text>
</comment>